<name>Y163_METJA</name>
<proteinExistence type="predicted"/>
<feature type="chain" id="PRO_0000106725" description="Uncharacterized protein MJ0163">
    <location>
        <begin position="1"/>
        <end position="187"/>
    </location>
</feature>
<feature type="transmembrane region" description="Helical" evidence="1">
    <location>
        <begin position="3"/>
        <end position="23"/>
    </location>
</feature>
<evidence type="ECO:0000255" key="1"/>
<evidence type="ECO:0000305" key="2"/>
<reference key="1">
    <citation type="journal article" date="1996" name="Science">
        <title>Complete genome sequence of the methanogenic archaeon, Methanococcus jannaschii.</title>
        <authorList>
            <person name="Bult C.J."/>
            <person name="White O."/>
            <person name="Olsen G.J."/>
            <person name="Zhou L."/>
            <person name="Fleischmann R.D."/>
            <person name="Sutton G.G."/>
            <person name="Blake J.A."/>
            <person name="FitzGerald L.M."/>
            <person name="Clayton R.A."/>
            <person name="Gocayne J.D."/>
            <person name="Kerlavage A.R."/>
            <person name="Dougherty B.A."/>
            <person name="Tomb J.-F."/>
            <person name="Adams M.D."/>
            <person name="Reich C.I."/>
            <person name="Overbeek R."/>
            <person name="Kirkness E.F."/>
            <person name="Weinstock K.G."/>
            <person name="Merrick J.M."/>
            <person name="Glodek A."/>
            <person name="Scott J.L."/>
            <person name="Geoghagen N.S.M."/>
            <person name="Weidman J.F."/>
            <person name="Fuhrmann J.L."/>
            <person name="Nguyen D."/>
            <person name="Utterback T.R."/>
            <person name="Kelley J.M."/>
            <person name="Peterson J.D."/>
            <person name="Sadow P.W."/>
            <person name="Hanna M.C."/>
            <person name="Cotton M.D."/>
            <person name="Roberts K.M."/>
            <person name="Hurst M.A."/>
            <person name="Kaine B.P."/>
            <person name="Borodovsky M."/>
            <person name="Klenk H.-P."/>
            <person name="Fraser C.M."/>
            <person name="Smith H.O."/>
            <person name="Woese C.R."/>
            <person name="Venter J.C."/>
        </authorList>
    </citation>
    <scope>NUCLEOTIDE SEQUENCE [LARGE SCALE GENOMIC DNA]</scope>
    <source>
        <strain>ATCC 43067 / DSM 2661 / JAL-1 / JCM 10045 / NBRC 100440</strain>
    </source>
</reference>
<comment type="subcellular location">
    <subcellularLocation>
        <location evidence="2">Membrane</location>
        <topology evidence="2">Single-pass membrane protein</topology>
    </subcellularLocation>
</comment>
<gene>
    <name type="ordered locus">MJ0163</name>
</gene>
<organism>
    <name type="scientific">Methanocaldococcus jannaschii (strain ATCC 43067 / DSM 2661 / JAL-1 / JCM 10045 / NBRC 100440)</name>
    <name type="common">Methanococcus jannaschii</name>
    <dbReference type="NCBI Taxonomy" id="243232"/>
    <lineage>
        <taxon>Archaea</taxon>
        <taxon>Methanobacteriati</taxon>
        <taxon>Methanobacteriota</taxon>
        <taxon>Methanomada group</taxon>
        <taxon>Methanococci</taxon>
        <taxon>Methanococcales</taxon>
        <taxon>Methanocaldococcaceae</taxon>
        <taxon>Methanocaldococcus</taxon>
    </lineage>
</organism>
<keyword id="KW-0472">Membrane</keyword>
<keyword id="KW-1185">Reference proteome</keyword>
<keyword id="KW-0812">Transmembrane</keyword>
<keyword id="KW-1133">Transmembrane helix</keyword>
<accession>Q57627</accession>
<sequence>MDAIIIFLILFIVGVLIGVGVYYYKEKERKKTYKIIEMEIIENLKELKPYVAPDEGREYTKEFDLVEIALSYDIEDIIVVNDEGLVIATTLKDADEVGATASSIFEYIKKLCGNIKKVVIFKEDSYLYIYPLKLYGENLYVIIESKIALDVIEEKEILKRITGVLKKYFSTITTIEQEIPEEALLSI</sequence>
<protein>
    <recommendedName>
        <fullName>Uncharacterized protein MJ0163</fullName>
    </recommendedName>
</protein>
<dbReference type="EMBL" id="L77117">
    <property type="protein sequence ID" value="AAB98151.1"/>
    <property type="molecule type" value="Genomic_DNA"/>
</dbReference>
<dbReference type="PIR" id="D64320">
    <property type="entry name" value="D64320"/>
</dbReference>
<dbReference type="SMR" id="Q57627"/>
<dbReference type="STRING" id="243232.MJ_0163"/>
<dbReference type="PaxDb" id="243232-MJ_0163"/>
<dbReference type="EnsemblBacteria" id="AAB98151">
    <property type="protein sequence ID" value="AAB98151"/>
    <property type="gene ID" value="MJ_0163"/>
</dbReference>
<dbReference type="KEGG" id="mja:MJ_0163"/>
<dbReference type="eggNOG" id="arCOG03412">
    <property type="taxonomic scope" value="Archaea"/>
</dbReference>
<dbReference type="HOGENOM" id="CLU_122697_0_0_2"/>
<dbReference type="InParanoid" id="Q57627"/>
<dbReference type="OrthoDB" id="60411at2157"/>
<dbReference type="Proteomes" id="UP000000805">
    <property type="component" value="Chromosome"/>
</dbReference>
<dbReference type="GO" id="GO:0016020">
    <property type="term" value="C:membrane"/>
    <property type="evidence" value="ECO:0007669"/>
    <property type="project" value="UniProtKB-SubCell"/>
</dbReference>
<dbReference type="InterPro" id="IPR004942">
    <property type="entry name" value="Roadblock/LAMTOR2_dom"/>
</dbReference>
<dbReference type="Pfam" id="PF03259">
    <property type="entry name" value="Robl_LC7"/>
    <property type="match status" value="1"/>
</dbReference>
<dbReference type="SMART" id="SM00960">
    <property type="entry name" value="Robl_LC7"/>
    <property type="match status" value="1"/>
</dbReference>
<dbReference type="SUPFAM" id="SSF103196">
    <property type="entry name" value="Roadblock/LC7 domain"/>
    <property type="match status" value="1"/>
</dbReference>